<feature type="signal peptide" evidence="1">
    <location>
        <begin position="1"/>
        <end position="31"/>
    </location>
</feature>
<feature type="chain" id="PRO_0000317750" description="Leucine-rich repeat-containing protein 70">
    <location>
        <begin position="32"/>
        <end position="622"/>
    </location>
</feature>
<feature type="transmembrane region" description="Helical" evidence="1">
    <location>
        <begin position="527"/>
        <end position="547"/>
    </location>
</feature>
<feature type="domain" description="LRRNT">
    <location>
        <begin position="32"/>
        <end position="60"/>
    </location>
</feature>
<feature type="repeat" description="LRR 1">
    <location>
        <begin position="61"/>
        <end position="82"/>
    </location>
</feature>
<feature type="repeat" description="LRR 2">
    <location>
        <begin position="85"/>
        <end position="106"/>
    </location>
</feature>
<feature type="repeat" description="LRR 3">
    <location>
        <begin position="109"/>
        <end position="130"/>
    </location>
</feature>
<feature type="repeat" description="LRR 4">
    <location>
        <begin position="133"/>
        <end position="154"/>
    </location>
</feature>
<feature type="repeat" description="LRR 5">
    <location>
        <begin position="157"/>
        <end position="178"/>
    </location>
</feature>
<feature type="repeat" description="LRR 6">
    <location>
        <begin position="181"/>
        <end position="202"/>
    </location>
</feature>
<feature type="repeat" description="LRR 7">
    <location>
        <begin position="205"/>
        <end position="226"/>
    </location>
</feature>
<feature type="repeat" description="LRR 8">
    <location>
        <begin position="229"/>
        <end position="250"/>
    </location>
</feature>
<feature type="repeat" description="LRR 9">
    <location>
        <begin position="253"/>
        <end position="274"/>
    </location>
</feature>
<feature type="repeat" description="LRR 10">
    <location>
        <begin position="277"/>
        <end position="298"/>
    </location>
</feature>
<feature type="repeat" description="LRR 11">
    <location>
        <begin position="301"/>
        <end position="322"/>
    </location>
</feature>
<feature type="repeat" description="LRR 12">
    <location>
        <begin position="326"/>
        <end position="347"/>
    </location>
</feature>
<feature type="domain" description="LRRCT">
    <location>
        <begin position="359"/>
        <end position="406"/>
    </location>
</feature>
<feature type="glycosylation site" description="N-linked (GlcNAc...) asparagine" evidence="1">
    <location>
        <position position="215"/>
    </location>
</feature>
<feature type="glycosylation site" description="N-linked (GlcNAc...) asparagine" evidence="1">
    <location>
        <position position="266"/>
    </location>
</feature>
<feature type="glycosylation site" description="N-linked (GlcNAc...) asparagine" evidence="1">
    <location>
        <position position="331"/>
    </location>
</feature>
<feature type="glycosylation site" description="N-linked (GlcNAc...) asparagine" evidence="1">
    <location>
        <position position="400"/>
    </location>
</feature>
<feature type="sequence conflict" description="In Ref. 3; BAC85517." evidence="3" ref="3">
    <original>V</original>
    <variation>A</variation>
    <location>
        <position position="614"/>
    </location>
</feature>
<proteinExistence type="evidence at protein level"/>
<accession>Q7Z2Q7</accession>
<accession>Q6ZWI5</accession>
<dbReference type="EMBL" id="AY280614">
    <property type="protein sequence ID" value="AAP36706.1"/>
    <property type="molecule type" value="mRNA"/>
</dbReference>
<dbReference type="EMBL" id="AY358733">
    <property type="protein sequence ID" value="AAQ89095.1"/>
    <property type="molecule type" value="mRNA"/>
</dbReference>
<dbReference type="EMBL" id="AK123022">
    <property type="protein sequence ID" value="BAC85517.1"/>
    <property type="molecule type" value="mRNA"/>
</dbReference>
<dbReference type="EMBL" id="CH471137">
    <property type="protein sequence ID" value="EAW51382.1"/>
    <property type="molecule type" value="Genomic_DNA"/>
</dbReference>
<dbReference type="CCDS" id="CCDS47218.1"/>
<dbReference type="RefSeq" id="NP_852607.3">
    <property type="nucleotide sequence ID" value="NM_181506.4"/>
</dbReference>
<dbReference type="SMR" id="Q7Z2Q7"/>
<dbReference type="BioGRID" id="131676">
    <property type="interactions" value="3"/>
</dbReference>
<dbReference type="FunCoup" id="Q7Z2Q7">
    <property type="interactions" value="54"/>
</dbReference>
<dbReference type="IntAct" id="Q7Z2Q7">
    <property type="interactions" value="1"/>
</dbReference>
<dbReference type="STRING" id="9606.ENSP00000399441"/>
<dbReference type="GlyCosmos" id="Q7Z2Q7">
    <property type="glycosylation" value="5 sites, 1 glycan"/>
</dbReference>
<dbReference type="GlyGen" id="Q7Z2Q7">
    <property type="glycosylation" value="5 sites, 1 O-linked glycan (1 site)"/>
</dbReference>
<dbReference type="iPTMnet" id="Q7Z2Q7"/>
<dbReference type="PhosphoSitePlus" id="Q7Z2Q7"/>
<dbReference type="BioMuta" id="LRRC70"/>
<dbReference type="DMDM" id="74759111"/>
<dbReference type="PaxDb" id="9606-ENSP00000399441"/>
<dbReference type="PeptideAtlas" id="Q7Z2Q7"/>
<dbReference type="ProteomicsDB" id="68964"/>
<dbReference type="Antibodypedia" id="23715">
    <property type="antibodies" value="59 antibodies from 13 providers"/>
</dbReference>
<dbReference type="DNASU" id="100130733"/>
<dbReference type="Ensembl" id="ENST00000334994.6">
    <property type="protein sequence ID" value="ENSP00000399441.1"/>
    <property type="gene ID" value="ENSG00000186105.8"/>
</dbReference>
<dbReference type="GeneID" id="100130733"/>
<dbReference type="KEGG" id="hsa:100130733"/>
<dbReference type="MANE-Select" id="ENST00000334994.6">
    <property type="protein sequence ID" value="ENSP00000399441.1"/>
    <property type="RefSeq nucleotide sequence ID" value="NM_181506.5"/>
    <property type="RefSeq protein sequence ID" value="NP_852607.3"/>
</dbReference>
<dbReference type="UCSC" id="uc011cqs.1">
    <property type="organism name" value="human"/>
</dbReference>
<dbReference type="AGR" id="HGNC:35155"/>
<dbReference type="CTD" id="100130733"/>
<dbReference type="GeneCards" id="LRRC70"/>
<dbReference type="HGNC" id="HGNC:35155">
    <property type="gene designation" value="LRRC70"/>
</dbReference>
<dbReference type="HPA" id="ENSG00000186105">
    <property type="expression patterns" value="Low tissue specificity"/>
</dbReference>
<dbReference type="neXtProt" id="NX_Q7Z2Q7"/>
<dbReference type="OpenTargets" id="ENSG00000186105"/>
<dbReference type="PharmGKB" id="PA164722127"/>
<dbReference type="VEuPathDB" id="HostDB:ENSG00000186105"/>
<dbReference type="eggNOG" id="KOG0619">
    <property type="taxonomic scope" value="Eukaryota"/>
</dbReference>
<dbReference type="GeneTree" id="ENSGT00940000163637"/>
<dbReference type="HOGENOM" id="CLU_484489_0_0_1"/>
<dbReference type="InParanoid" id="Q7Z2Q7"/>
<dbReference type="OMA" id="QANYNPW"/>
<dbReference type="OrthoDB" id="6363818at2759"/>
<dbReference type="PAN-GO" id="Q7Z2Q7">
    <property type="GO annotations" value="1 GO annotation based on evolutionary models"/>
</dbReference>
<dbReference type="PhylomeDB" id="Q7Z2Q7"/>
<dbReference type="TreeFam" id="TF331598"/>
<dbReference type="PathwayCommons" id="Q7Z2Q7"/>
<dbReference type="SignaLink" id="Q7Z2Q7"/>
<dbReference type="BioGRID-ORCS" id="100130733">
    <property type="hits" value="11 hits in 1142 CRISPR screens"/>
</dbReference>
<dbReference type="GenomeRNAi" id="100130733"/>
<dbReference type="Pharos" id="Q7Z2Q7">
    <property type="development level" value="Tdark"/>
</dbReference>
<dbReference type="PRO" id="PR:Q7Z2Q7"/>
<dbReference type="Proteomes" id="UP000005640">
    <property type="component" value="Chromosome 5"/>
</dbReference>
<dbReference type="RNAct" id="Q7Z2Q7">
    <property type="molecule type" value="protein"/>
</dbReference>
<dbReference type="Bgee" id="ENSG00000186105">
    <property type="expression patterns" value="Expressed in male germ line stem cell (sensu Vertebrata) in testis and 97 other cell types or tissues"/>
</dbReference>
<dbReference type="ExpressionAtlas" id="Q7Z2Q7">
    <property type="expression patterns" value="baseline and differential"/>
</dbReference>
<dbReference type="GO" id="GO:0005886">
    <property type="term" value="C:plasma membrane"/>
    <property type="evidence" value="ECO:0000314"/>
    <property type="project" value="UniProtKB"/>
</dbReference>
<dbReference type="GO" id="GO:0060760">
    <property type="term" value="P:positive regulation of response to cytokine stimulus"/>
    <property type="evidence" value="ECO:0000315"/>
    <property type="project" value="UniProtKB"/>
</dbReference>
<dbReference type="FunFam" id="3.80.10.10:FF:001367">
    <property type="entry name" value="Leucine-rich repeat-containing protein 70"/>
    <property type="match status" value="1"/>
</dbReference>
<dbReference type="FunFam" id="3.80.10.10:FF:000770">
    <property type="entry name" value="Uncharacterized protein"/>
    <property type="match status" value="1"/>
</dbReference>
<dbReference type="Gene3D" id="3.80.10.10">
    <property type="entry name" value="Ribonuclease Inhibitor"/>
    <property type="match status" value="3"/>
</dbReference>
<dbReference type="InterPro" id="IPR000483">
    <property type="entry name" value="Cys-rich_flank_reg_C"/>
</dbReference>
<dbReference type="InterPro" id="IPR050328">
    <property type="entry name" value="Dev_Immune_Receptor"/>
</dbReference>
<dbReference type="InterPro" id="IPR001611">
    <property type="entry name" value="Leu-rich_rpt"/>
</dbReference>
<dbReference type="InterPro" id="IPR003591">
    <property type="entry name" value="Leu-rich_rpt_typical-subtyp"/>
</dbReference>
<dbReference type="InterPro" id="IPR026906">
    <property type="entry name" value="LRR_5"/>
</dbReference>
<dbReference type="InterPro" id="IPR032675">
    <property type="entry name" value="LRR_dom_sf"/>
</dbReference>
<dbReference type="PANTHER" id="PTHR24373:SF382">
    <property type="entry name" value="LEUCINE RICH REPEAT CONTAINING 70"/>
    <property type="match status" value="1"/>
</dbReference>
<dbReference type="PANTHER" id="PTHR24373">
    <property type="entry name" value="SLIT RELATED LEUCINE-RICH REPEAT NEURONAL PROTEIN"/>
    <property type="match status" value="1"/>
</dbReference>
<dbReference type="Pfam" id="PF13306">
    <property type="entry name" value="LRR_5"/>
    <property type="match status" value="1"/>
</dbReference>
<dbReference type="Pfam" id="PF13855">
    <property type="entry name" value="LRR_8"/>
    <property type="match status" value="2"/>
</dbReference>
<dbReference type="SMART" id="SM00365">
    <property type="entry name" value="LRR_SD22"/>
    <property type="match status" value="3"/>
</dbReference>
<dbReference type="SMART" id="SM00369">
    <property type="entry name" value="LRR_TYP"/>
    <property type="match status" value="11"/>
</dbReference>
<dbReference type="SMART" id="SM00082">
    <property type="entry name" value="LRRCT"/>
    <property type="match status" value="1"/>
</dbReference>
<dbReference type="SUPFAM" id="SSF52058">
    <property type="entry name" value="L domain-like"/>
    <property type="match status" value="1"/>
</dbReference>
<dbReference type="PROSITE" id="PS51450">
    <property type="entry name" value="LRR"/>
    <property type="match status" value="11"/>
</dbReference>
<reference key="1">
    <citation type="journal article" date="2003" name="Biochem. Biophys. Res. Commun.">
        <title>Synleurin, a novel leucine-rich repeat protein that increases the intensity of pleiotropic cytokine responses.</title>
        <authorList>
            <person name="Wang W."/>
            <person name="Yang Y."/>
            <person name="Li L."/>
            <person name="Shi Y."/>
        </authorList>
    </citation>
    <scope>NUCLEOTIDE SEQUENCE [MRNA]</scope>
    <scope>FUNCTION</scope>
    <scope>TISSUE SPECIFICITY</scope>
</reference>
<reference key="2">
    <citation type="journal article" date="2003" name="Genome Res.">
        <title>The secreted protein discovery initiative (SPDI), a large-scale effort to identify novel human secreted and transmembrane proteins: a bioinformatics assessment.</title>
        <authorList>
            <person name="Clark H.F."/>
            <person name="Gurney A.L."/>
            <person name="Abaya E."/>
            <person name="Baker K."/>
            <person name="Baldwin D.T."/>
            <person name="Brush J."/>
            <person name="Chen J."/>
            <person name="Chow B."/>
            <person name="Chui C."/>
            <person name="Crowley C."/>
            <person name="Currell B."/>
            <person name="Deuel B."/>
            <person name="Dowd P."/>
            <person name="Eaton D."/>
            <person name="Foster J.S."/>
            <person name="Grimaldi C."/>
            <person name="Gu Q."/>
            <person name="Hass P.E."/>
            <person name="Heldens S."/>
            <person name="Huang A."/>
            <person name="Kim H.S."/>
            <person name="Klimowski L."/>
            <person name="Jin Y."/>
            <person name="Johnson S."/>
            <person name="Lee J."/>
            <person name="Lewis L."/>
            <person name="Liao D."/>
            <person name="Mark M.R."/>
            <person name="Robbie E."/>
            <person name="Sanchez C."/>
            <person name="Schoenfeld J."/>
            <person name="Seshagiri S."/>
            <person name="Simmons L."/>
            <person name="Singh J."/>
            <person name="Smith V."/>
            <person name="Stinson J."/>
            <person name="Vagts A."/>
            <person name="Vandlen R.L."/>
            <person name="Watanabe C."/>
            <person name="Wieand D."/>
            <person name="Woods K."/>
            <person name="Xie M.-H."/>
            <person name="Yansura D.G."/>
            <person name="Yi S."/>
            <person name="Yu G."/>
            <person name="Yuan J."/>
            <person name="Zhang M."/>
            <person name="Zhang Z."/>
            <person name="Goddard A.D."/>
            <person name="Wood W.I."/>
            <person name="Godowski P.J."/>
            <person name="Gray A.M."/>
        </authorList>
    </citation>
    <scope>NUCLEOTIDE SEQUENCE [LARGE SCALE MRNA]</scope>
</reference>
<reference key="3">
    <citation type="journal article" date="2004" name="Nat. Genet.">
        <title>Complete sequencing and characterization of 21,243 full-length human cDNAs.</title>
        <authorList>
            <person name="Ota T."/>
            <person name="Suzuki Y."/>
            <person name="Nishikawa T."/>
            <person name="Otsuki T."/>
            <person name="Sugiyama T."/>
            <person name="Irie R."/>
            <person name="Wakamatsu A."/>
            <person name="Hayashi K."/>
            <person name="Sato H."/>
            <person name="Nagai K."/>
            <person name="Kimura K."/>
            <person name="Makita H."/>
            <person name="Sekine M."/>
            <person name="Obayashi M."/>
            <person name="Nishi T."/>
            <person name="Shibahara T."/>
            <person name="Tanaka T."/>
            <person name="Ishii S."/>
            <person name="Yamamoto J."/>
            <person name="Saito K."/>
            <person name="Kawai Y."/>
            <person name="Isono Y."/>
            <person name="Nakamura Y."/>
            <person name="Nagahari K."/>
            <person name="Murakami K."/>
            <person name="Yasuda T."/>
            <person name="Iwayanagi T."/>
            <person name="Wagatsuma M."/>
            <person name="Shiratori A."/>
            <person name="Sudo H."/>
            <person name="Hosoiri T."/>
            <person name="Kaku Y."/>
            <person name="Kodaira H."/>
            <person name="Kondo H."/>
            <person name="Sugawara M."/>
            <person name="Takahashi M."/>
            <person name="Kanda K."/>
            <person name="Yokoi T."/>
            <person name="Furuya T."/>
            <person name="Kikkawa E."/>
            <person name="Omura Y."/>
            <person name="Abe K."/>
            <person name="Kamihara K."/>
            <person name="Katsuta N."/>
            <person name="Sato K."/>
            <person name="Tanikawa M."/>
            <person name="Yamazaki M."/>
            <person name="Ninomiya K."/>
            <person name="Ishibashi T."/>
            <person name="Yamashita H."/>
            <person name="Murakawa K."/>
            <person name="Fujimori K."/>
            <person name="Tanai H."/>
            <person name="Kimata M."/>
            <person name="Watanabe M."/>
            <person name="Hiraoka S."/>
            <person name="Chiba Y."/>
            <person name="Ishida S."/>
            <person name="Ono Y."/>
            <person name="Takiguchi S."/>
            <person name="Watanabe S."/>
            <person name="Yosida M."/>
            <person name="Hotuta T."/>
            <person name="Kusano J."/>
            <person name="Kanehori K."/>
            <person name="Takahashi-Fujii A."/>
            <person name="Hara H."/>
            <person name="Tanase T.-O."/>
            <person name="Nomura Y."/>
            <person name="Togiya S."/>
            <person name="Komai F."/>
            <person name="Hara R."/>
            <person name="Takeuchi K."/>
            <person name="Arita M."/>
            <person name="Imose N."/>
            <person name="Musashino K."/>
            <person name="Yuuki H."/>
            <person name="Oshima A."/>
            <person name="Sasaki N."/>
            <person name="Aotsuka S."/>
            <person name="Yoshikawa Y."/>
            <person name="Matsunawa H."/>
            <person name="Ichihara T."/>
            <person name="Shiohata N."/>
            <person name="Sano S."/>
            <person name="Moriya S."/>
            <person name="Momiyama H."/>
            <person name="Satoh N."/>
            <person name="Takami S."/>
            <person name="Terashima Y."/>
            <person name="Suzuki O."/>
            <person name="Nakagawa S."/>
            <person name="Senoh A."/>
            <person name="Mizoguchi H."/>
            <person name="Goto Y."/>
            <person name="Shimizu F."/>
            <person name="Wakebe H."/>
            <person name="Hishigaki H."/>
            <person name="Watanabe T."/>
            <person name="Sugiyama A."/>
            <person name="Takemoto M."/>
            <person name="Kawakami B."/>
            <person name="Yamazaki M."/>
            <person name="Watanabe K."/>
            <person name="Kumagai A."/>
            <person name="Itakura S."/>
            <person name="Fukuzumi Y."/>
            <person name="Fujimori Y."/>
            <person name="Komiyama M."/>
            <person name="Tashiro H."/>
            <person name="Tanigami A."/>
            <person name="Fujiwara T."/>
            <person name="Ono T."/>
            <person name="Yamada K."/>
            <person name="Fujii Y."/>
            <person name="Ozaki K."/>
            <person name="Hirao M."/>
            <person name="Ohmori Y."/>
            <person name="Kawabata A."/>
            <person name="Hikiji T."/>
            <person name="Kobatake N."/>
            <person name="Inagaki H."/>
            <person name="Ikema Y."/>
            <person name="Okamoto S."/>
            <person name="Okitani R."/>
            <person name="Kawakami T."/>
            <person name="Noguchi S."/>
            <person name="Itoh T."/>
            <person name="Shigeta K."/>
            <person name="Senba T."/>
            <person name="Matsumura K."/>
            <person name="Nakajima Y."/>
            <person name="Mizuno T."/>
            <person name="Morinaga M."/>
            <person name="Sasaki M."/>
            <person name="Togashi T."/>
            <person name="Oyama M."/>
            <person name="Hata H."/>
            <person name="Watanabe M."/>
            <person name="Komatsu T."/>
            <person name="Mizushima-Sugano J."/>
            <person name="Satoh T."/>
            <person name="Shirai Y."/>
            <person name="Takahashi Y."/>
            <person name="Nakagawa K."/>
            <person name="Okumura K."/>
            <person name="Nagase T."/>
            <person name="Nomura N."/>
            <person name="Kikuchi H."/>
            <person name="Masuho Y."/>
            <person name="Yamashita R."/>
            <person name="Nakai K."/>
            <person name="Yada T."/>
            <person name="Nakamura Y."/>
            <person name="Ohara O."/>
            <person name="Isogai T."/>
            <person name="Sugano S."/>
        </authorList>
    </citation>
    <scope>NUCLEOTIDE SEQUENCE [LARGE SCALE MRNA]</scope>
    <source>
        <tissue>Amygdala</tissue>
    </source>
</reference>
<reference key="4">
    <citation type="submission" date="2005-09" db="EMBL/GenBank/DDBJ databases">
        <authorList>
            <person name="Mural R.J."/>
            <person name="Istrail S."/>
            <person name="Sutton G.G."/>
            <person name="Florea L."/>
            <person name="Halpern A.L."/>
            <person name="Mobarry C.M."/>
            <person name="Lippert R."/>
            <person name="Walenz B."/>
            <person name="Shatkay H."/>
            <person name="Dew I."/>
            <person name="Miller J.R."/>
            <person name="Flanigan M.J."/>
            <person name="Edwards N.J."/>
            <person name="Bolanos R."/>
            <person name="Fasulo D."/>
            <person name="Halldorsson B.V."/>
            <person name="Hannenhalli S."/>
            <person name="Turner R."/>
            <person name="Yooseph S."/>
            <person name="Lu F."/>
            <person name="Nusskern D.R."/>
            <person name="Shue B.C."/>
            <person name="Zheng X.H."/>
            <person name="Zhong F."/>
            <person name="Delcher A.L."/>
            <person name="Huson D.H."/>
            <person name="Kravitz S.A."/>
            <person name="Mouchard L."/>
            <person name="Reinert K."/>
            <person name="Remington K.A."/>
            <person name="Clark A.G."/>
            <person name="Waterman M.S."/>
            <person name="Eichler E.E."/>
            <person name="Adams M.D."/>
            <person name="Hunkapiller M.W."/>
            <person name="Myers E.W."/>
            <person name="Venter J.C."/>
        </authorList>
    </citation>
    <scope>NUCLEOTIDE SEQUENCE [LARGE SCALE GENOMIC DNA]</scope>
</reference>
<name>LRR70_HUMAN</name>
<sequence>MCGLQFSLPCLRLFLVVTCYLLLLLHKEILGCSSVCQLCTGRQINCRNLGLSSIPKNFPESTVFLYLTGNNISYINESELTGLHSLVALYLDNSNILYVYPKAFVQLRHLYFLFLNNNFIKRLDPGIFKGLLNLRNLYLQYNQVSFVPRGVFNDLVSVQYLNLQRNRLTVLGSGTFVGMVALRILDLSNNNILRISESGFQHLENLACLYLGSNNLTKVPSNAFEVLKSLRRLSLSHNPIEAIQPFAFKGLANLEYLLLKNSRIRNVTRDGFSGINNLKHLILSHNDLENLNSDTFSLLKNLIYLKLDRNRIISIDNDTFENMGASLKILNLSFNNLTALHPRVLKPLSSLIHLQANSNPWECNCKLLGLRDWLASSAITLNIYCQNPPSMRGRALRYINITNCVTSSINVSRAWAVVKSPHIHHKTTALMMAWHKVTTNGSPLENTETENITFWERIPTSPAGRFFQENAFGNPLETTAVLPVQIQLTTSVTLNLEKNSALPNDAASMSGKTSLICTQEVEKLNEAFDILLAFFILACVLIIFLIYKVVQFKQKLKASENSRENRLEYYSFYQSARYNVTASICNTSPNSLESPGLEQIRLHKQIVPENEAQVILFEHSAL</sequence>
<protein>
    <recommendedName>
        <fullName>Leucine-rich repeat-containing protein 70</fullName>
    </recommendedName>
    <alternativeName>
        <fullName>Synleurin</fullName>
    </alternativeName>
</protein>
<comment type="function">
    <text evidence="2">Renders cells highly sensitive to the activation by cytokines and lipopolysaccharide (LPS).</text>
</comment>
<comment type="subcellular location">
    <subcellularLocation>
        <location evidence="3">Membrane</location>
        <topology evidence="3">Single-pass membrane protein</topology>
    </subcellularLocation>
</comment>
<comment type="tissue specificity">
    <text evidence="2">Expressed at low levels in many tissues, including smooth muscle, brain, uterus, pancreas, cartilage, adipose, spleen and testis.</text>
</comment>
<organism>
    <name type="scientific">Homo sapiens</name>
    <name type="common">Human</name>
    <dbReference type="NCBI Taxonomy" id="9606"/>
    <lineage>
        <taxon>Eukaryota</taxon>
        <taxon>Metazoa</taxon>
        <taxon>Chordata</taxon>
        <taxon>Craniata</taxon>
        <taxon>Vertebrata</taxon>
        <taxon>Euteleostomi</taxon>
        <taxon>Mammalia</taxon>
        <taxon>Eutheria</taxon>
        <taxon>Euarchontoglires</taxon>
        <taxon>Primates</taxon>
        <taxon>Haplorrhini</taxon>
        <taxon>Catarrhini</taxon>
        <taxon>Hominidae</taxon>
        <taxon>Homo</taxon>
    </lineage>
</organism>
<gene>
    <name type="primary">LRRC70</name>
    <name type="ORF">UNQ1891/PRO4337</name>
</gene>
<evidence type="ECO:0000255" key="1"/>
<evidence type="ECO:0000269" key="2">
    <source>
    </source>
</evidence>
<evidence type="ECO:0000305" key="3"/>
<keyword id="KW-0325">Glycoprotein</keyword>
<keyword id="KW-0433">Leucine-rich repeat</keyword>
<keyword id="KW-0472">Membrane</keyword>
<keyword id="KW-1267">Proteomics identification</keyword>
<keyword id="KW-1185">Reference proteome</keyword>
<keyword id="KW-0677">Repeat</keyword>
<keyword id="KW-0732">Signal</keyword>
<keyword id="KW-0812">Transmembrane</keyword>
<keyword id="KW-1133">Transmembrane helix</keyword>